<reference key="1">
    <citation type="journal article" date="2004" name="Plant J.">
        <title>OsYSL2 is a rice metal-nicotianamine transporter that is regulated by iron and expressed in the phloem.</title>
        <authorList>
            <person name="Koike S."/>
            <person name="Inoue H."/>
            <person name="Mizuno D."/>
            <person name="Takahashi M."/>
            <person name="Nakanishi H."/>
            <person name="Mori S."/>
            <person name="Nishizawa N.K."/>
        </authorList>
    </citation>
    <scope>NUCLEOTIDE SEQUENCE [MRNA]</scope>
    <scope>TISSUE SPECIFICITY</scope>
    <scope>GENE FAMILY</scope>
    <scope>NOMENCLATURE</scope>
    <source>
        <strain>cv. Nipponbare</strain>
    </source>
</reference>
<reference key="2">
    <citation type="journal article" date="2005" name="Nature">
        <title>The map-based sequence of the rice genome.</title>
        <authorList>
            <consortium name="International rice genome sequencing project (IRGSP)"/>
        </authorList>
    </citation>
    <scope>NUCLEOTIDE SEQUENCE [LARGE SCALE GENOMIC DNA]</scope>
    <source>
        <strain>cv. Nipponbare</strain>
    </source>
</reference>
<reference key="3">
    <citation type="journal article" date="2008" name="Nucleic Acids Res.">
        <title>The rice annotation project database (RAP-DB): 2008 update.</title>
        <authorList>
            <consortium name="The rice annotation project (RAP)"/>
        </authorList>
    </citation>
    <scope>GENOME REANNOTATION</scope>
    <source>
        <strain>cv. Nipponbare</strain>
    </source>
</reference>
<reference key="4">
    <citation type="journal article" date="2013" name="Rice">
        <title>Improvement of the Oryza sativa Nipponbare reference genome using next generation sequence and optical map data.</title>
        <authorList>
            <person name="Kawahara Y."/>
            <person name="de la Bastide M."/>
            <person name="Hamilton J.P."/>
            <person name="Kanamori H."/>
            <person name="McCombie W.R."/>
            <person name="Ouyang S."/>
            <person name="Schwartz D.C."/>
            <person name="Tanaka T."/>
            <person name="Wu J."/>
            <person name="Zhou S."/>
            <person name="Childs K.L."/>
            <person name="Davidson R.M."/>
            <person name="Lin H."/>
            <person name="Quesada-Ocampo L."/>
            <person name="Vaillancourt B."/>
            <person name="Sakai H."/>
            <person name="Lee S.S."/>
            <person name="Kim J."/>
            <person name="Numa H."/>
            <person name="Itoh T."/>
            <person name="Buell C.R."/>
            <person name="Matsumoto T."/>
        </authorList>
    </citation>
    <scope>GENOME REANNOTATION</scope>
    <source>
        <strain>cv. Nipponbare</strain>
    </source>
</reference>
<reference key="5">
    <citation type="journal article" date="2009" name="J. Biol. Chem.">
        <title>Rice OsYSL15 is an iron-regulated iron(III)-deoxymugineic acid Transporter expressed in the roots and is essential for iron uptake in early growth of the seedlings.</title>
        <authorList>
            <person name="Inoue H."/>
            <person name="Kobayashi T."/>
            <person name="Nozoye T."/>
            <person name="Takahashi M."/>
            <person name="Kakei Y."/>
            <person name="Suzuki K."/>
            <person name="Nakazono M."/>
            <person name="Nakanishi H."/>
            <person name="Mori S."/>
            <person name="Nishizawa N.K."/>
        </authorList>
    </citation>
    <scope>TISSUE SPECIFICITY</scope>
</reference>
<gene>
    <name type="primary">YSL14</name>
    <name type="ordered locus">Os02g0633300</name>
    <name type="ordered locus">LOC_Os02g42220</name>
    <name type="ORF">OJ1643_A10.18</name>
</gene>
<proteinExistence type="evidence at transcript level"/>
<organism>
    <name type="scientific">Oryza sativa subsp. japonica</name>
    <name type="common">Rice</name>
    <dbReference type="NCBI Taxonomy" id="39947"/>
    <lineage>
        <taxon>Eukaryota</taxon>
        <taxon>Viridiplantae</taxon>
        <taxon>Streptophyta</taxon>
        <taxon>Embryophyta</taxon>
        <taxon>Tracheophyta</taxon>
        <taxon>Spermatophyta</taxon>
        <taxon>Magnoliopsida</taxon>
        <taxon>Liliopsida</taxon>
        <taxon>Poales</taxon>
        <taxon>Poaceae</taxon>
        <taxon>BOP clade</taxon>
        <taxon>Oryzoideae</taxon>
        <taxon>Oryzeae</taxon>
        <taxon>Oryzinae</taxon>
        <taxon>Oryza</taxon>
        <taxon>Oryza sativa</taxon>
    </lineage>
</organism>
<comment type="function">
    <text evidence="1">May be involved in the transport of nicotianamine-chelated metals.</text>
</comment>
<comment type="subcellular location">
    <subcellularLocation>
        <location evidence="6">Membrane</location>
        <topology evidence="6">Multi-pass membrane protein</topology>
    </subcellularLocation>
</comment>
<comment type="tissue specificity">
    <text evidence="4 5">Expressed in leaves and at low levels in roots.</text>
</comment>
<comment type="similarity">
    <text evidence="6">Belongs to the YSL (TC 2.A.67.2) family.</text>
</comment>
<comment type="sequence caution" evidence="6">
    <conflict type="erroneous gene model prediction">
        <sequence resource="EMBL-CDS" id="BAF09423"/>
    </conflict>
</comment>
<accession>Q6H7J6</accession>
<accession>Q0DZB5</accession>
<accession>Q3V7B7</accession>
<evidence type="ECO:0000250" key="1"/>
<evidence type="ECO:0000255" key="2"/>
<evidence type="ECO:0000256" key="3">
    <source>
        <dbReference type="SAM" id="MobiDB-lite"/>
    </source>
</evidence>
<evidence type="ECO:0000269" key="4">
    <source>
    </source>
</evidence>
<evidence type="ECO:0000269" key="5">
    <source>
    </source>
</evidence>
<evidence type="ECO:0000305" key="6"/>
<protein>
    <recommendedName>
        <fullName>Probable metal-nicotianamine transporter YSL14</fullName>
    </recommendedName>
    <alternativeName>
        <fullName>Protein YELLOW STRIPE LIKE 14</fullName>
        <shortName>OsYSL14</shortName>
    </alternativeName>
</protein>
<name>YSL14_ORYSJ</name>
<sequence length="727" mass="78494">MAQHTAAAAGGDEEVAEAEAAAAAAAGSTLRHRHAGKGAEEHEAAGGGGGGRNGGADDPDATSVERVFADKAVPSWREQLTLRAFVVSALLAVMFSVIVMKLNLTTGIIPSLNVSAGLLGFFFVRLWTSAVERIGLLKQPFTRQENTVIQTCVVSAYGIAFSGGFGSYLFGMSETIAKQATEAKDAQNIKDPHLGWMIGFLFLVSFIGLFALVPLRKIMIVDYKLTYPSGTATAYLINGFHTPEGAKLAKKQVKTLGKYFLFSFFWGFFQWFYTAGDDCGFKNFPTLGLEAYNNRFFFDFSPTYVGVGMICPYIVNVSVLLGGILSWGVMWPLIAKKKGSWYPADISDNSLHGLQAYRVFISIALILGDGLYNFLKVLIRTIAGFISMVQNNSKGMLPVSDNGMSMSTAEEVSFDDERRTEIFLKDQIPKSVAYGGYVVVAALSIGTLPEIFPQLKWYYILVAYIVAPVLAFCNAYGSGLTDWSLASTYGKLAIFVFGAWAGLSHGGVLVGLAACGVMMSIVSTASDLMQDFKTGYLTLASPRSMFISQVIGTGMGCVIAPCVFWLFYKAFSNIGTSGTEYPAPYAIVYRNMAILGVDGFNSLPENCLTLCYIFFAAAIAINLIRDLAPHKVSRFIPLPMAMAIPFYIGSYFAIDMFLGSVILFVWEKLNKAKADAFGPAVASGLICGDGIWTLPQSILALAKVKPPICMKFLSRAANAKVDSFLAG</sequence>
<dbReference type="EMBL" id="AB164645">
    <property type="protein sequence ID" value="BAE44205.1"/>
    <property type="molecule type" value="mRNA"/>
</dbReference>
<dbReference type="EMBL" id="AP004192">
    <property type="protein sequence ID" value="BAD25303.1"/>
    <property type="molecule type" value="Genomic_DNA"/>
</dbReference>
<dbReference type="EMBL" id="AP008208">
    <property type="protein sequence ID" value="BAF09423.1"/>
    <property type="status" value="ALT_SEQ"/>
    <property type="molecule type" value="Genomic_DNA"/>
</dbReference>
<dbReference type="EMBL" id="AP014958">
    <property type="status" value="NOT_ANNOTATED_CDS"/>
    <property type="molecule type" value="Genomic_DNA"/>
</dbReference>
<dbReference type="RefSeq" id="XP_015625646.1">
    <property type="nucleotide sequence ID" value="XM_015770160.1"/>
</dbReference>
<dbReference type="SMR" id="Q6H7J6"/>
<dbReference type="FunCoup" id="Q6H7J6">
    <property type="interactions" value="129"/>
</dbReference>
<dbReference type="STRING" id="39947.Q6H7J6"/>
<dbReference type="PaxDb" id="39947-Q6H7J6"/>
<dbReference type="InParanoid" id="Q6H7J6"/>
<dbReference type="OrthoDB" id="627262at2759"/>
<dbReference type="Proteomes" id="UP000000763">
    <property type="component" value="Chromosome 2"/>
</dbReference>
<dbReference type="Proteomes" id="UP000059680">
    <property type="component" value="Chromosome 2"/>
</dbReference>
<dbReference type="GO" id="GO:0016020">
    <property type="term" value="C:membrane"/>
    <property type="evidence" value="ECO:0000318"/>
    <property type="project" value="GO_Central"/>
</dbReference>
<dbReference type="GO" id="GO:0035673">
    <property type="term" value="F:oligopeptide transmembrane transporter activity"/>
    <property type="evidence" value="ECO:0007669"/>
    <property type="project" value="InterPro"/>
</dbReference>
<dbReference type="InterPro" id="IPR004813">
    <property type="entry name" value="OPT"/>
</dbReference>
<dbReference type="InterPro" id="IPR045035">
    <property type="entry name" value="YSL-like"/>
</dbReference>
<dbReference type="NCBIfam" id="TIGR00728">
    <property type="entry name" value="OPT_sfam"/>
    <property type="match status" value="1"/>
</dbReference>
<dbReference type="PANTHER" id="PTHR31645:SF41">
    <property type="entry name" value="METAL-NICOTIANAMINE TRANSPORTER YSL14-RELATED"/>
    <property type="match status" value="1"/>
</dbReference>
<dbReference type="PANTHER" id="PTHR31645">
    <property type="entry name" value="OLIGOPEPTIDE TRANSPORTER YGL114W-RELATED"/>
    <property type="match status" value="1"/>
</dbReference>
<dbReference type="Pfam" id="PF03169">
    <property type="entry name" value="OPT"/>
    <property type="match status" value="1"/>
</dbReference>
<keyword id="KW-0472">Membrane</keyword>
<keyword id="KW-1185">Reference proteome</keyword>
<keyword id="KW-0812">Transmembrane</keyword>
<keyword id="KW-1133">Transmembrane helix</keyword>
<keyword id="KW-0813">Transport</keyword>
<feature type="chain" id="PRO_0000363877" description="Probable metal-nicotianamine transporter YSL14">
    <location>
        <begin position="1"/>
        <end position="727"/>
    </location>
</feature>
<feature type="transmembrane region" description="Helical" evidence="2">
    <location>
        <begin position="84"/>
        <end position="104"/>
    </location>
</feature>
<feature type="transmembrane region" description="Helical" evidence="2">
    <location>
        <begin position="107"/>
        <end position="127"/>
    </location>
</feature>
<feature type="transmembrane region" description="Helical" evidence="2">
    <location>
        <begin position="152"/>
        <end position="172"/>
    </location>
</feature>
<feature type="transmembrane region" description="Helical" evidence="2">
    <location>
        <begin position="194"/>
        <end position="214"/>
    </location>
</feature>
<feature type="transmembrane region" description="Helical" evidence="2">
    <location>
        <begin position="256"/>
        <end position="276"/>
    </location>
</feature>
<feature type="transmembrane region" description="Helical" evidence="2">
    <location>
        <begin position="314"/>
        <end position="334"/>
    </location>
</feature>
<feature type="transmembrane region" description="Helical" evidence="2">
    <location>
        <begin position="359"/>
        <end position="379"/>
    </location>
</feature>
<feature type="transmembrane region" description="Helical" evidence="2">
    <location>
        <begin position="432"/>
        <end position="452"/>
    </location>
</feature>
<feature type="transmembrane region" description="Helical" evidence="2">
    <location>
        <begin position="460"/>
        <end position="480"/>
    </location>
</feature>
<feature type="transmembrane region" description="Helical" evidence="2">
    <location>
        <begin position="492"/>
        <end position="512"/>
    </location>
</feature>
<feature type="transmembrane region" description="Helical" evidence="2">
    <location>
        <begin position="546"/>
        <end position="566"/>
    </location>
</feature>
<feature type="transmembrane region" description="Helical" evidence="2">
    <location>
        <begin position="604"/>
        <end position="624"/>
    </location>
</feature>
<feature type="transmembrane region" description="Helical" evidence="2">
    <location>
        <begin position="646"/>
        <end position="666"/>
    </location>
</feature>
<feature type="transmembrane region" description="Helical" evidence="2">
    <location>
        <begin position="681"/>
        <end position="701"/>
    </location>
</feature>
<feature type="region of interest" description="Disordered" evidence="3">
    <location>
        <begin position="1"/>
        <end position="61"/>
    </location>
</feature>
<feature type="compositionally biased region" description="Low complexity" evidence="3">
    <location>
        <begin position="1"/>
        <end position="10"/>
    </location>
</feature>
<feature type="compositionally biased region" description="Low complexity" evidence="3">
    <location>
        <begin position="18"/>
        <end position="27"/>
    </location>
</feature>
<feature type="compositionally biased region" description="Gly residues" evidence="3">
    <location>
        <begin position="45"/>
        <end position="54"/>
    </location>
</feature>
<feature type="sequence conflict" description="In Ref. 1; BAE44205." evidence="6" ref="1">
    <original>T</original>
    <variation>S</variation>
    <location>
        <position position="5"/>
    </location>
</feature>
<feature type="sequence conflict" description="In Ref. 1; BAE44205." evidence="6" ref="1">
    <original>GGG</original>
    <variation>RGR</variation>
    <location>
        <begin position="47"/>
        <end position="49"/>
    </location>
</feature>